<comment type="function">
    <text evidence="2">Plays a role in the regulation of the mitochondrial ribosome assembly and of translational activity (By similarity). Displays mitochondrial GTPase activity (By similarity).</text>
</comment>
<comment type="subcellular location">
    <subcellularLocation>
        <location evidence="2">Mitochondrion inner membrane</location>
        <topology evidence="2">Peripheral membrane protein</topology>
        <orientation evidence="2">Matrix side</orientation>
    </subcellularLocation>
</comment>
<comment type="similarity">
    <text evidence="4">Belongs to the TRAFAC class YlqF/YawG GTPase family. MTG1 subfamily.</text>
</comment>
<reference evidence="5" key="1">
    <citation type="submission" date="2007-11" db="EMBL/GenBank/DDBJ databases">
        <authorList>
            <consortium name="NIH - Xenopus Gene Collection (XGC) project"/>
        </authorList>
    </citation>
    <scope>NUCLEOTIDE SEQUENCE [LARGE SCALE MRNA]</scope>
    <source>
        <strain evidence="5">N6</strain>
        <tissue evidence="5">Ovary</tissue>
    </source>
</reference>
<accession>A9JTX2</accession>
<dbReference type="EMBL" id="BC155522">
    <property type="protein sequence ID" value="AAI55523.1"/>
    <property type="molecule type" value="mRNA"/>
</dbReference>
<dbReference type="RefSeq" id="NP_001106634.1">
    <property type="nucleotide sequence ID" value="NM_001113163.2"/>
</dbReference>
<dbReference type="RefSeq" id="XP_012821402.1">
    <property type="nucleotide sequence ID" value="XM_012965948.3"/>
</dbReference>
<dbReference type="RefSeq" id="XP_012821403.1">
    <property type="nucleotide sequence ID" value="XM_012965949.3"/>
</dbReference>
<dbReference type="RefSeq" id="XP_017950730.1">
    <property type="nucleotide sequence ID" value="XM_018095241.2"/>
</dbReference>
<dbReference type="SMR" id="A9JTX2"/>
<dbReference type="FunCoup" id="A9JTX2">
    <property type="interactions" value="1861"/>
</dbReference>
<dbReference type="STRING" id="8364.ENSXETP00000012849"/>
<dbReference type="PaxDb" id="8364-ENSXETP00000047908"/>
<dbReference type="GeneID" id="100127874"/>
<dbReference type="KEGG" id="xtr:100127874"/>
<dbReference type="AGR" id="Xenbase:XB-GENE-957647"/>
<dbReference type="CTD" id="92170"/>
<dbReference type="Xenbase" id="XB-GENE-957647">
    <property type="gene designation" value="mtg1"/>
</dbReference>
<dbReference type="eggNOG" id="KOG2485">
    <property type="taxonomic scope" value="Eukaryota"/>
</dbReference>
<dbReference type="HOGENOM" id="CLU_011106_0_2_1"/>
<dbReference type="InParanoid" id="A9JTX2"/>
<dbReference type="OMA" id="GVLWPKF"/>
<dbReference type="OrthoDB" id="269151at2759"/>
<dbReference type="Proteomes" id="UP000008143">
    <property type="component" value="Chromosome 7"/>
</dbReference>
<dbReference type="Bgee" id="ENSXETG00000022149">
    <property type="expression patterns" value="Expressed in heart and 10 other cell types or tissues"/>
</dbReference>
<dbReference type="GO" id="GO:0005743">
    <property type="term" value="C:mitochondrial inner membrane"/>
    <property type="evidence" value="ECO:0000250"/>
    <property type="project" value="UniProtKB"/>
</dbReference>
<dbReference type="GO" id="GO:0005759">
    <property type="term" value="C:mitochondrial matrix"/>
    <property type="evidence" value="ECO:0000250"/>
    <property type="project" value="UniProtKB"/>
</dbReference>
<dbReference type="GO" id="GO:0005761">
    <property type="term" value="C:mitochondrial ribosome"/>
    <property type="evidence" value="ECO:0000250"/>
    <property type="project" value="UniProtKB"/>
</dbReference>
<dbReference type="GO" id="GO:0005525">
    <property type="term" value="F:GTP binding"/>
    <property type="evidence" value="ECO:0007669"/>
    <property type="project" value="UniProtKB-KW"/>
</dbReference>
<dbReference type="GO" id="GO:0006417">
    <property type="term" value="P:regulation of translation"/>
    <property type="evidence" value="ECO:0007669"/>
    <property type="project" value="UniProtKB-KW"/>
</dbReference>
<dbReference type="CDD" id="cd01856">
    <property type="entry name" value="YlqF"/>
    <property type="match status" value="1"/>
</dbReference>
<dbReference type="FunFam" id="1.10.1580.10:FF:000004">
    <property type="entry name" value="Mitochondrial GTPase 1"/>
    <property type="match status" value="1"/>
</dbReference>
<dbReference type="FunFam" id="3.40.50.300:FF:000876">
    <property type="entry name" value="Mitochondrial GTPase 1"/>
    <property type="match status" value="1"/>
</dbReference>
<dbReference type="Gene3D" id="1.10.1580.10">
    <property type="match status" value="1"/>
</dbReference>
<dbReference type="Gene3D" id="3.40.50.300">
    <property type="entry name" value="P-loop containing nucleotide triphosphate hydrolases"/>
    <property type="match status" value="1"/>
</dbReference>
<dbReference type="InterPro" id="IPR030378">
    <property type="entry name" value="G_CP_dom"/>
</dbReference>
<dbReference type="InterPro" id="IPR006073">
    <property type="entry name" value="GTP-bd"/>
</dbReference>
<dbReference type="InterPro" id="IPR023179">
    <property type="entry name" value="GTP-bd_ortho_bundle_sf"/>
</dbReference>
<dbReference type="InterPro" id="IPR016478">
    <property type="entry name" value="GTPase_MTG1"/>
</dbReference>
<dbReference type="InterPro" id="IPR027417">
    <property type="entry name" value="P-loop_NTPase"/>
</dbReference>
<dbReference type="PANTHER" id="PTHR45782">
    <property type="entry name" value="MITOCHONDRIAL RIBOSOME-ASSOCIATED GTPASE 1"/>
    <property type="match status" value="1"/>
</dbReference>
<dbReference type="PANTHER" id="PTHR45782:SF4">
    <property type="entry name" value="MITOCHONDRIAL RIBOSOME-ASSOCIATED GTPASE 1"/>
    <property type="match status" value="1"/>
</dbReference>
<dbReference type="Pfam" id="PF01926">
    <property type="entry name" value="MMR_HSR1"/>
    <property type="match status" value="1"/>
</dbReference>
<dbReference type="PIRSF" id="PIRSF006230">
    <property type="entry name" value="MG442"/>
    <property type="match status" value="1"/>
</dbReference>
<dbReference type="PRINTS" id="PR00326">
    <property type="entry name" value="GTP1OBG"/>
</dbReference>
<dbReference type="SUPFAM" id="SSF52540">
    <property type="entry name" value="P-loop containing nucleoside triphosphate hydrolases"/>
    <property type="match status" value="1"/>
</dbReference>
<dbReference type="PROSITE" id="PS51721">
    <property type="entry name" value="G_CP"/>
    <property type="match status" value="1"/>
</dbReference>
<evidence type="ECO:0000250" key="1">
    <source>
        <dbReference type="UniProtKB" id="O31743"/>
    </source>
</evidence>
<evidence type="ECO:0000250" key="2">
    <source>
        <dbReference type="UniProtKB" id="Q9BT17"/>
    </source>
</evidence>
<evidence type="ECO:0000255" key="3"/>
<evidence type="ECO:0000255" key="4">
    <source>
        <dbReference type="PROSITE-ProRule" id="PRU01058"/>
    </source>
</evidence>
<evidence type="ECO:0000312" key="5">
    <source>
        <dbReference type="EMBL" id="AAI55523.1"/>
    </source>
</evidence>
<evidence type="ECO:0000312" key="6">
    <source>
        <dbReference type="Xenbase" id="XB-GENE-957647"/>
    </source>
</evidence>
<keyword id="KW-0342">GTP-binding</keyword>
<keyword id="KW-0472">Membrane</keyword>
<keyword id="KW-0496">Mitochondrion</keyword>
<keyword id="KW-0999">Mitochondrion inner membrane</keyword>
<keyword id="KW-0547">Nucleotide-binding</keyword>
<keyword id="KW-1185">Reference proteome</keyword>
<keyword id="KW-0809">Transit peptide</keyword>
<keyword id="KW-0810">Translation regulation</keyword>
<proteinExistence type="evidence at transcript level"/>
<organism>
    <name type="scientific">Xenopus tropicalis</name>
    <name type="common">Western clawed frog</name>
    <name type="synonym">Silurana tropicalis</name>
    <dbReference type="NCBI Taxonomy" id="8364"/>
    <lineage>
        <taxon>Eukaryota</taxon>
        <taxon>Metazoa</taxon>
        <taxon>Chordata</taxon>
        <taxon>Craniata</taxon>
        <taxon>Vertebrata</taxon>
        <taxon>Euteleostomi</taxon>
        <taxon>Amphibia</taxon>
        <taxon>Batrachia</taxon>
        <taxon>Anura</taxon>
        <taxon>Pipoidea</taxon>
        <taxon>Pipidae</taxon>
        <taxon>Xenopodinae</taxon>
        <taxon>Xenopus</taxon>
        <taxon>Silurana</taxon>
    </lineage>
</organism>
<sequence length="311" mass="34977">MRLSWLLRKSFDFGEREVAHWFPGHMAKGLKQMKTKLKNLDCIVEVHDARIPLSGRNPIFQDSLGMKPHLLILNKMDLADLTQKKRILAQLKQQGVGNVIFTDCVKDQNIKHVVPVISELVGCSQRFHREENTETCIMVIGVPNVGKSSLINALRRMHLRKGKASRVGAEPGITRSVLTKIQVSESPLIFLFDTPGVLSPRIESVETGMKLALCGTILDHLVGEDIMADYLLYILNQQMQHRYVEHYGLEKPCADIETLLKRIALKLGKTQKVKAITGVGDVNITVPNYNAAAYDFIRTFRRGQLGVVMLD</sequence>
<gene>
    <name evidence="6" type="primary">mtg1</name>
</gene>
<feature type="transit peptide" description="Mitochondrion" evidence="2 3">
    <location>
        <begin position="1"/>
        <end status="unknown"/>
    </location>
</feature>
<feature type="chain" id="PRO_0000409874" description="Mitochondrial ribosome-associated GTPase 1">
    <location>
        <begin status="unknown"/>
        <end position="311"/>
    </location>
</feature>
<feature type="domain" description="CP-type G" evidence="4">
    <location>
        <begin position="27"/>
        <end position="200"/>
    </location>
</feature>
<feature type="binding site" evidence="1">
    <location>
        <begin position="74"/>
        <end position="77"/>
    </location>
    <ligand>
        <name>GTP</name>
        <dbReference type="ChEBI" id="CHEBI:37565"/>
    </ligand>
</feature>
<feature type="binding site" evidence="1">
    <location>
        <begin position="144"/>
        <end position="149"/>
    </location>
    <ligand>
        <name>GTP</name>
        <dbReference type="ChEBI" id="CHEBI:37565"/>
    </ligand>
</feature>
<feature type="binding site" evidence="1">
    <location>
        <position position="196"/>
    </location>
    <ligand>
        <name>GTP</name>
        <dbReference type="ChEBI" id="CHEBI:37565"/>
    </ligand>
</feature>
<name>MTG1_XENTR</name>
<protein>
    <recommendedName>
        <fullName>Mitochondrial ribosome-associated GTPase 1</fullName>
    </recommendedName>
    <alternativeName>
        <fullName evidence="2">Mitochondrial GTPase 1</fullName>
    </alternativeName>
</protein>